<gene>
    <name evidence="1" type="primary">deoB</name>
    <name type="ordered locus">Lm4b_01973</name>
</gene>
<comment type="function">
    <text evidence="1">Isomerase that catalyzes the conversion of deoxy-ribose 1-phosphate (dRib-1-P) and ribose 1-phosphate (Rib-1-P) to deoxy-ribose 5-phosphate (dRib-5-P) and ribose 5-phosphate (Rib-5-P), respectively.</text>
</comment>
<comment type="catalytic activity">
    <reaction evidence="1">
        <text>2-deoxy-alpha-D-ribose 1-phosphate = 2-deoxy-D-ribose 5-phosphate</text>
        <dbReference type="Rhea" id="RHEA:27658"/>
        <dbReference type="ChEBI" id="CHEBI:57259"/>
        <dbReference type="ChEBI" id="CHEBI:62877"/>
        <dbReference type="EC" id="5.4.2.7"/>
    </reaction>
</comment>
<comment type="catalytic activity">
    <reaction evidence="1">
        <text>alpha-D-ribose 1-phosphate = D-ribose 5-phosphate</text>
        <dbReference type="Rhea" id="RHEA:18793"/>
        <dbReference type="ChEBI" id="CHEBI:57720"/>
        <dbReference type="ChEBI" id="CHEBI:78346"/>
        <dbReference type="EC" id="5.4.2.7"/>
    </reaction>
</comment>
<comment type="cofactor">
    <cofactor evidence="1">
        <name>Mn(2+)</name>
        <dbReference type="ChEBI" id="CHEBI:29035"/>
    </cofactor>
    <text evidence="1">Binds 2 manganese ions.</text>
</comment>
<comment type="pathway">
    <text evidence="1">Carbohydrate degradation; 2-deoxy-D-ribose 1-phosphate degradation; D-glyceraldehyde 3-phosphate and acetaldehyde from 2-deoxy-alpha-D-ribose 1-phosphate: step 1/2.</text>
</comment>
<comment type="subcellular location">
    <subcellularLocation>
        <location evidence="1">Cytoplasm</location>
    </subcellularLocation>
</comment>
<comment type="similarity">
    <text evidence="1">Belongs to the phosphopentomutase family.</text>
</comment>
<dbReference type="EC" id="5.4.2.7" evidence="1"/>
<dbReference type="EMBL" id="FM242711">
    <property type="protein sequence ID" value="CAS05730.1"/>
    <property type="molecule type" value="Genomic_DNA"/>
</dbReference>
<dbReference type="RefSeq" id="WP_003725942.1">
    <property type="nucleotide sequence ID" value="NC_012488.1"/>
</dbReference>
<dbReference type="SMR" id="C1KWQ5"/>
<dbReference type="KEGG" id="lmc:Lm4b_01973"/>
<dbReference type="HOGENOM" id="CLU_053861_0_0_9"/>
<dbReference type="UniPathway" id="UPA00002">
    <property type="reaction ID" value="UER00467"/>
</dbReference>
<dbReference type="GO" id="GO:0005829">
    <property type="term" value="C:cytosol"/>
    <property type="evidence" value="ECO:0007669"/>
    <property type="project" value="TreeGrafter"/>
</dbReference>
<dbReference type="GO" id="GO:0000287">
    <property type="term" value="F:magnesium ion binding"/>
    <property type="evidence" value="ECO:0007669"/>
    <property type="project" value="InterPro"/>
</dbReference>
<dbReference type="GO" id="GO:0030145">
    <property type="term" value="F:manganese ion binding"/>
    <property type="evidence" value="ECO:0007669"/>
    <property type="project" value="UniProtKB-UniRule"/>
</dbReference>
<dbReference type="GO" id="GO:0008973">
    <property type="term" value="F:phosphopentomutase activity"/>
    <property type="evidence" value="ECO:0007669"/>
    <property type="project" value="UniProtKB-UniRule"/>
</dbReference>
<dbReference type="GO" id="GO:0006018">
    <property type="term" value="P:2-deoxyribose 1-phosphate catabolic process"/>
    <property type="evidence" value="ECO:0007669"/>
    <property type="project" value="UniProtKB-UniRule"/>
</dbReference>
<dbReference type="GO" id="GO:0006015">
    <property type="term" value="P:5-phosphoribose 1-diphosphate biosynthetic process"/>
    <property type="evidence" value="ECO:0007669"/>
    <property type="project" value="UniProtKB-UniPathway"/>
</dbReference>
<dbReference type="GO" id="GO:0043094">
    <property type="term" value="P:metabolic compound salvage"/>
    <property type="evidence" value="ECO:0007669"/>
    <property type="project" value="InterPro"/>
</dbReference>
<dbReference type="GO" id="GO:0009117">
    <property type="term" value="P:nucleotide metabolic process"/>
    <property type="evidence" value="ECO:0007669"/>
    <property type="project" value="InterPro"/>
</dbReference>
<dbReference type="CDD" id="cd16009">
    <property type="entry name" value="PPM"/>
    <property type="match status" value="1"/>
</dbReference>
<dbReference type="FunFam" id="3.30.70.1250:FF:000001">
    <property type="entry name" value="Phosphopentomutase"/>
    <property type="match status" value="1"/>
</dbReference>
<dbReference type="Gene3D" id="3.40.720.10">
    <property type="entry name" value="Alkaline Phosphatase, subunit A"/>
    <property type="match status" value="1"/>
</dbReference>
<dbReference type="Gene3D" id="3.30.70.1250">
    <property type="entry name" value="Phosphopentomutase"/>
    <property type="match status" value="1"/>
</dbReference>
<dbReference type="HAMAP" id="MF_00740">
    <property type="entry name" value="Phosphopentomut"/>
    <property type="match status" value="1"/>
</dbReference>
<dbReference type="InterPro" id="IPR017850">
    <property type="entry name" value="Alkaline_phosphatase_core_sf"/>
</dbReference>
<dbReference type="InterPro" id="IPR010045">
    <property type="entry name" value="DeoB"/>
</dbReference>
<dbReference type="InterPro" id="IPR006124">
    <property type="entry name" value="Metalloenzyme"/>
</dbReference>
<dbReference type="InterPro" id="IPR024052">
    <property type="entry name" value="Phosphopentomutase_DeoB_cap_sf"/>
</dbReference>
<dbReference type="NCBIfam" id="TIGR01696">
    <property type="entry name" value="deoB"/>
    <property type="match status" value="1"/>
</dbReference>
<dbReference type="NCBIfam" id="NF003766">
    <property type="entry name" value="PRK05362.1"/>
    <property type="match status" value="1"/>
</dbReference>
<dbReference type="PANTHER" id="PTHR21110">
    <property type="entry name" value="PHOSPHOPENTOMUTASE"/>
    <property type="match status" value="1"/>
</dbReference>
<dbReference type="PANTHER" id="PTHR21110:SF0">
    <property type="entry name" value="PHOSPHOPENTOMUTASE"/>
    <property type="match status" value="1"/>
</dbReference>
<dbReference type="Pfam" id="PF01676">
    <property type="entry name" value="Metalloenzyme"/>
    <property type="match status" value="1"/>
</dbReference>
<dbReference type="PIRSF" id="PIRSF001491">
    <property type="entry name" value="Ppentomutase"/>
    <property type="match status" value="1"/>
</dbReference>
<dbReference type="SUPFAM" id="SSF53649">
    <property type="entry name" value="Alkaline phosphatase-like"/>
    <property type="match status" value="1"/>
</dbReference>
<dbReference type="SUPFAM" id="SSF143856">
    <property type="entry name" value="DeoB insert domain-like"/>
    <property type="match status" value="1"/>
</dbReference>
<sequence>MPDKFKRVHVVVMDSVGIGEAPDAAKFGDFDVDTFGHIAKHVGGLKMPEMGKLGLSNIREIDGIKKAEKPLAYYTKMQEASNGKDTMTGHWEIMGLYIDTPFRVFPDGFPDDLINQIEEKTGRKVIGNKPASGTEIMAELGEEHVKTGALIVYTSADSVLQIAAHEDVVPLEELYEICEFCRKITLDDPYMLGRIIARPFVGEPGAFVRTPNRHDYALKPFKPTVMDALKDGGKDVIAIGKISDIFDGEGVTESIRTKSNMDGMDQFIAVLDKDFNGMSFLNLVDFDALFGHRRDPQGYADALVDFDGRLVEVMEKLTDDDLLIITADHGNDPTYSGTDHTREFVPLLVYSPRFKNGGSELELRKTFADLGATVADNFEVKMPEYGTSFLKDLK</sequence>
<reference key="1">
    <citation type="journal article" date="2012" name="BMC Genomics">
        <title>Comparative genomics and transcriptomics of lineages I, II, and III strains of Listeria monocytogenes.</title>
        <authorList>
            <person name="Hain T."/>
            <person name="Ghai R."/>
            <person name="Billion A."/>
            <person name="Kuenne C.T."/>
            <person name="Steinweg C."/>
            <person name="Izar B."/>
            <person name="Mohamed W."/>
            <person name="Mraheil M."/>
            <person name="Domann E."/>
            <person name="Schaffrath S."/>
            <person name="Karst U."/>
            <person name="Goesmann A."/>
            <person name="Oehm S."/>
            <person name="Puhler A."/>
            <person name="Merkl R."/>
            <person name="Vorwerk S."/>
            <person name="Glaser P."/>
            <person name="Garrido P."/>
            <person name="Rusniok C."/>
            <person name="Buchrieser C."/>
            <person name="Goebel W."/>
            <person name="Chakraborty T."/>
        </authorList>
    </citation>
    <scope>NUCLEOTIDE SEQUENCE [LARGE SCALE GENOMIC DNA]</scope>
    <source>
        <strain>CLIP80459</strain>
    </source>
</reference>
<name>DEOB_LISMC</name>
<accession>C1KWQ5</accession>
<keyword id="KW-0963">Cytoplasm</keyword>
<keyword id="KW-0413">Isomerase</keyword>
<keyword id="KW-0464">Manganese</keyword>
<keyword id="KW-0479">Metal-binding</keyword>
<feature type="chain" id="PRO_1000212811" description="Phosphopentomutase">
    <location>
        <begin position="1"/>
        <end position="394"/>
    </location>
</feature>
<feature type="binding site" evidence="1">
    <location>
        <position position="14"/>
    </location>
    <ligand>
        <name>Mn(2+)</name>
        <dbReference type="ChEBI" id="CHEBI:29035"/>
        <label>1</label>
    </ligand>
</feature>
<feature type="binding site" evidence="1">
    <location>
        <position position="287"/>
    </location>
    <ligand>
        <name>Mn(2+)</name>
        <dbReference type="ChEBI" id="CHEBI:29035"/>
        <label>2</label>
    </ligand>
</feature>
<feature type="binding site" evidence="1">
    <location>
        <position position="292"/>
    </location>
    <ligand>
        <name>Mn(2+)</name>
        <dbReference type="ChEBI" id="CHEBI:29035"/>
        <label>2</label>
    </ligand>
</feature>
<feature type="binding site" evidence="1">
    <location>
        <position position="328"/>
    </location>
    <ligand>
        <name>Mn(2+)</name>
        <dbReference type="ChEBI" id="CHEBI:29035"/>
        <label>1</label>
    </ligand>
</feature>
<feature type="binding site" evidence="1">
    <location>
        <position position="329"/>
    </location>
    <ligand>
        <name>Mn(2+)</name>
        <dbReference type="ChEBI" id="CHEBI:29035"/>
        <label>1</label>
    </ligand>
</feature>
<feature type="binding site" evidence="1">
    <location>
        <position position="340"/>
    </location>
    <ligand>
        <name>Mn(2+)</name>
        <dbReference type="ChEBI" id="CHEBI:29035"/>
        <label>2</label>
    </ligand>
</feature>
<protein>
    <recommendedName>
        <fullName evidence="1">Phosphopentomutase</fullName>
        <ecNumber evidence="1">5.4.2.7</ecNumber>
    </recommendedName>
    <alternativeName>
        <fullName evidence="1">Phosphodeoxyribomutase</fullName>
    </alternativeName>
</protein>
<organism>
    <name type="scientific">Listeria monocytogenes serotype 4b (strain CLIP80459)</name>
    <dbReference type="NCBI Taxonomy" id="568819"/>
    <lineage>
        <taxon>Bacteria</taxon>
        <taxon>Bacillati</taxon>
        <taxon>Bacillota</taxon>
        <taxon>Bacilli</taxon>
        <taxon>Bacillales</taxon>
        <taxon>Listeriaceae</taxon>
        <taxon>Listeria</taxon>
    </lineage>
</organism>
<proteinExistence type="inferred from homology"/>
<evidence type="ECO:0000255" key="1">
    <source>
        <dbReference type="HAMAP-Rule" id="MF_00740"/>
    </source>
</evidence>